<sequence>MGSGSGWKGRDVISILDFDRDSLEQLFEVADKFSSLLRERGRIPLLEGYIVALAFFEPSTRTRLSFETAAKRLGADTIGFTSEEAISIAKGETLADTIRMLDSYADMIVLRHRYEGAALYAAEIAEHPVINAGDGKQHHPTQAMLDLYTVRKLFGTIDGLTYGVLGDLRYGRAASSFILALTIYRPRMIYLISPPLLRVRPEVRMVLDERGMRYREVESLEEVLGELDVLYVTRIQRERFPDQREYEKVRGSYRVTLELLEQHARRELRILHPLPRVDEIAPEVDGTPYAAYFEQARNGVPVRMALLALIAGREV</sequence>
<name>PYRB_HYPBU</name>
<protein>
    <recommendedName>
        <fullName evidence="1">Aspartate carbamoyltransferase catalytic subunit</fullName>
        <ecNumber evidence="1">2.1.3.2</ecNumber>
    </recommendedName>
    <alternativeName>
        <fullName evidence="1">Aspartate transcarbamylase</fullName>
        <shortName evidence="1">ATCase</shortName>
    </alternativeName>
</protein>
<feature type="chain" id="PRO_0000321184" description="Aspartate carbamoyltransferase catalytic subunit">
    <location>
        <begin position="1"/>
        <end position="315"/>
    </location>
</feature>
<feature type="binding site" evidence="1">
    <location>
        <position position="61"/>
    </location>
    <ligand>
        <name>carbamoyl phosphate</name>
        <dbReference type="ChEBI" id="CHEBI:58228"/>
    </ligand>
</feature>
<feature type="binding site" evidence="1">
    <location>
        <position position="62"/>
    </location>
    <ligand>
        <name>carbamoyl phosphate</name>
        <dbReference type="ChEBI" id="CHEBI:58228"/>
    </ligand>
</feature>
<feature type="binding site" evidence="1">
    <location>
        <position position="90"/>
    </location>
    <ligand>
        <name>L-aspartate</name>
        <dbReference type="ChEBI" id="CHEBI:29991"/>
    </ligand>
</feature>
<feature type="binding site" evidence="1">
    <location>
        <position position="111"/>
    </location>
    <ligand>
        <name>carbamoyl phosphate</name>
        <dbReference type="ChEBI" id="CHEBI:58228"/>
    </ligand>
</feature>
<feature type="binding site" evidence="1">
    <location>
        <position position="139"/>
    </location>
    <ligand>
        <name>carbamoyl phosphate</name>
        <dbReference type="ChEBI" id="CHEBI:58228"/>
    </ligand>
</feature>
<feature type="binding site" evidence="1">
    <location>
        <position position="142"/>
    </location>
    <ligand>
        <name>carbamoyl phosphate</name>
        <dbReference type="ChEBI" id="CHEBI:58228"/>
    </ligand>
</feature>
<feature type="binding site" evidence="1">
    <location>
        <position position="172"/>
    </location>
    <ligand>
        <name>L-aspartate</name>
        <dbReference type="ChEBI" id="CHEBI:29991"/>
    </ligand>
</feature>
<feature type="binding site" evidence="1">
    <location>
        <position position="234"/>
    </location>
    <ligand>
        <name>L-aspartate</name>
        <dbReference type="ChEBI" id="CHEBI:29991"/>
    </ligand>
</feature>
<feature type="binding site" evidence="1">
    <location>
        <position position="274"/>
    </location>
    <ligand>
        <name>carbamoyl phosphate</name>
        <dbReference type="ChEBI" id="CHEBI:58228"/>
    </ligand>
</feature>
<feature type="binding site" evidence="1">
    <location>
        <position position="275"/>
    </location>
    <ligand>
        <name>carbamoyl phosphate</name>
        <dbReference type="ChEBI" id="CHEBI:58228"/>
    </ligand>
</feature>
<gene>
    <name evidence="1" type="primary">pyrB</name>
    <name type="ordered locus">Hbut_0110</name>
</gene>
<organism>
    <name type="scientific">Hyperthermus butylicus (strain DSM 5456 / JCM 9403 / PLM1-5)</name>
    <dbReference type="NCBI Taxonomy" id="415426"/>
    <lineage>
        <taxon>Archaea</taxon>
        <taxon>Thermoproteota</taxon>
        <taxon>Thermoprotei</taxon>
        <taxon>Desulfurococcales</taxon>
        <taxon>Pyrodictiaceae</taxon>
        <taxon>Hyperthermus</taxon>
    </lineage>
</organism>
<dbReference type="EC" id="2.1.3.2" evidence="1"/>
<dbReference type="EMBL" id="CP000493">
    <property type="protein sequence ID" value="ABM79985.1"/>
    <property type="molecule type" value="Genomic_DNA"/>
</dbReference>
<dbReference type="RefSeq" id="WP_011821302.1">
    <property type="nucleotide sequence ID" value="NC_008818.1"/>
</dbReference>
<dbReference type="SMR" id="A2BJ24"/>
<dbReference type="STRING" id="415426.Hbut_0110"/>
<dbReference type="EnsemblBacteria" id="ABM79985">
    <property type="protein sequence ID" value="ABM79985"/>
    <property type="gene ID" value="Hbut_0110"/>
</dbReference>
<dbReference type="GeneID" id="4781405"/>
<dbReference type="KEGG" id="hbu:Hbut_0110"/>
<dbReference type="eggNOG" id="arCOG00911">
    <property type="taxonomic scope" value="Archaea"/>
</dbReference>
<dbReference type="HOGENOM" id="CLU_043846_1_2_2"/>
<dbReference type="OrthoDB" id="7792at2157"/>
<dbReference type="UniPathway" id="UPA00070">
    <property type="reaction ID" value="UER00116"/>
</dbReference>
<dbReference type="Proteomes" id="UP000002593">
    <property type="component" value="Chromosome"/>
</dbReference>
<dbReference type="GO" id="GO:0016597">
    <property type="term" value="F:amino acid binding"/>
    <property type="evidence" value="ECO:0007669"/>
    <property type="project" value="InterPro"/>
</dbReference>
<dbReference type="GO" id="GO:0004070">
    <property type="term" value="F:aspartate carbamoyltransferase activity"/>
    <property type="evidence" value="ECO:0007669"/>
    <property type="project" value="UniProtKB-UniRule"/>
</dbReference>
<dbReference type="GO" id="GO:0006207">
    <property type="term" value="P:'de novo' pyrimidine nucleobase biosynthetic process"/>
    <property type="evidence" value="ECO:0007669"/>
    <property type="project" value="InterPro"/>
</dbReference>
<dbReference type="GO" id="GO:0044205">
    <property type="term" value="P:'de novo' UMP biosynthetic process"/>
    <property type="evidence" value="ECO:0007669"/>
    <property type="project" value="UniProtKB-UniRule"/>
</dbReference>
<dbReference type="GO" id="GO:0006520">
    <property type="term" value="P:amino acid metabolic process"/>
    <property type="evidence" value="ECO:0007669"/>
    <property type="project" value="InterPro"/>
</dbReference>
<dbReference type="FunFam" id="3.40.50.1370:FF:000002">
    <property type="entry name" value="Aspartate carbamoyltransferase 2"/>
    <property type="match status" value="1"/>
</dbReference>
<dbReference type="Gene3D" id="3.40.50.1370">
    <property type="entry name" value="Aspartate/ornithine carbamoyltransferase"/>
    <property type="match status" value="2"/>
</dbReference>
<dbReference type="HAMAP" id="MF_00001">
    <property type="entry name" value="Asp_carb_tr"/>
    <property type="match status" value="1"/>
</dbReference>
<dbReference type="InterPro" id="IPR006132">
    <property type="entry name" value="Asp/Orn_carbamoyltranf_P-bd"/>
</dbReference>
<dbReference type="InterPro" id="IPR006130">
    <property type="entry name" value="Asp/Orn_carbamoylTrfase"/>
</dbReference>
<dbReference type="InterPro" id="IPR036901">
    <property type="entry name" value="Asp/Orn_carbamoylTrfase_sf"/>
</dbReference>
<dbReference type="InterPro" id="IPR002082">
    <property type="entry name" value="Asp_carbamoyltransf"/>
</dbReference>
<dbReference type="InterPro" id="IPR006131">
    <property type="entry name" value="Asp_carbamoyltransf_Asp/Orn-bd"/>
</dbReference>
<dbReference type="NCBIfam" id="TIGR00670">
    <property type="entry name" value="asp_carb_tr"/>
    <property type="match status" value="1"/>
</dbReference>
<dbReference type="NCBIfam" id="NF002032">
    <property type="entry name" value="PRK00856.1"/>
    <property type="match status" value="1"/>
</dbReference>
<dbReference type="PANTHER" id="PTHR45753:SF6">
    <property type="entry name" value="ASPARTATE CARBAMOYLTRANSFERASE"/>
    <property type="match status" value="1"/>
</dbReference>
<dbReference type="PANTHER" id="PTHR45753">
    <property type="entry name" value="ORNITHINE CARBAMOYLTRANSFERASE, MITOCHONDRIAL"/>
    <property type="match status" value="1"/>
</dbReference>
<dbReference type="Pfam" id="PF00185">
    <property type="entry name" value="OTCace"/>
    <property type="match status" value="1"/>
</dbReference>
<dbReference type="Pfam" id="PF02729">
    <property type="entry name" value="OTCace_N"/>
    <property type="match status" value="1"/>
</dbReference>
<dbReference type="PRINTS" id="PR00100">
    <property type="entry name" value="AOTCASE"/>
</dbReference>
<dbReference type="PRINTS" id="PR00101">
    <property type="entry name" value="ATCASE"/>
</dbReference>
<dbReference type="SUPFAM" id="SSF53671">
    <property type="entry name" value="Aspartate/ornithine carbamoyltransferase"/>
    <property type="match status" value="1"/>
</dbReference>
<dbReference type="PROSITE" id="PS00097">
    <property type="entry name" value="CARBAMOYLTRANSFERASE"/>
    <property type="match status" value="1"/>
</dbReference>
<accession>A2BJ24</accession>
<comment type="function">
    <text evidence="1">Catalyzes the condensation of carbamoyl phosphate and aspartate to form carbamoyl aspartate and inorganic phosphate, the committed step in the de novo pyrimidine nucleotide biosynthesis pathway.</text>
</comment>
<comment type="catalytic activity">
    <reaction evidence="1">
        <text>carbamoyl phosphate + L-aspartate = N-carbamoyl-L-aspartate + phosphate + H(+)</text>
        <dbReference type="Rhea" id="RHEA:20013"/>
        <dbReference type="ChEBI" id="CHEBI:15378"/>
        <dbReference type="ChEBI" id="CHEBI:29991"/>
        <dbReference type="ChEBI" id="CHEBI:32814"/>
        <dbReference type="ChEBI" id="CHEBI:43474"/>
        <dbReference type="ChEBI" id="CHEBI:58228"/>
        <dbReference type="EC" id="2.1.3.2"/>
    </reaction>
</comment>
<comment type="pathway">
    <text evidence="1">Pyrimidine metabolism; UMP biosynthesis via de novo pathway; (S)-dihydroorotate from bicarbonate: step 2/3.</text>
</comment>
<comment type="subunit">
    <text evidence="1">Heterooligomer of catalytic and regulatory chains.</text>
</comment>
<comment type="similarity">
    <text evidence="1">Belongs to the aspartate/ornithine carbamoyltransferase superfamily. ATCase family.</text>
</comment>
<evidence type="ECO:0000255" key="1">
    <source>
        <dbReference type="HAMAP-Rule" id="MF_00001"/>
    </source>
</evidence>
<reference key="1">
    <citation type="journal article" date="2007" name="Archaea">
        <title>The genome of Hyperthermus butylicus: a sulfur-reducing, peptide fermenting, neutrophilic Crenarchaeote growing up to 108 degrees C.</title>
        <authorList>
            <person name="Bruegger K."/>
            <person name="Chen L."/>
            <person name="Stark M."/>
            <person name="Zibat A."/>
            <person name="Redder P."/>
            <person name="Ruepp A."/>
            <person name="Awayez M."/>
            <person name="She Q."/>
            <person name="Garrett R.A."/>
            <person name="Klenk H.-P."/>
        </authorList>
    </citation>
    <scope>NUCLEOTIDE SEQUENCE [LARGE SCALE GENOMIC DNA]</scope>
    <source>
        <strain>DSM 5456 / JCM 9403 / PLM1-5</strain>
    </source>
</reference>
<proteinExistence type="inferred from homology"/>
<keyword id="KW-0665">Pyrimidine biosynthesis</keyword>
<keyword id="KW-1185">Reference proteome</keyword>
<keyword id="KW-0808">Transferase</keyword>